<organism>
    <name type="scientific">Canis lupus familiaris</name>
    <name type="common">Dog</name>
    <name type="synonym">Canis familiaris</name>
    <dbReference type="NCBI Taxonomy" id="9615"/>
    <lineage>
        <taxon>Eukaryota</taxon>
        <taxon>Metazoa</taxon>
        <taxon>Chordata</taxon>
        <taxon>Craniata</taxon>
        <taxon>Vertebrata</taxon>
        <taxon>Euteleostomi</taxon>
        <taxon>Mammalia</taxon>
        <taxon>Eutheria</taxon>
        <taxon>Laurasiatheria</taxon>
        <taxon>Carnivora</taxon>
        <taxon>Caniformia</taxon>
        <taxon>Canidae</taxon>
        <taxon>Canis</taxon>
    </lineage>
</organism>
<dbReference type="RefSeq" id="XP_038289657.1">
    <property type="nucleotide sequence ID" value="XM_038433729.1"/>
</dbReference>
<dbReference type="RefSeq" id="XP_038428138.1">
    <property type="nucleotide sequence ID" value="XM_038572210.1"/>
</dbReference>
<dbReference type="RefSeq" id="XP_542982.2">
    <property type="nucleotide sequence ID" value="XM_542982.7"/>
</dbReference>
<dbReference type="PDB" id="7TM3">
    <property type="method" value="EM"/>
    <property type="resolution" value="3.88 A"/>
    <property type="chains" value="9=1-129"/>
</dbReference>
<dbReference type="PDB" id="7TUT">
    <property type="method" value="EM"/>
    <property type="resolution" value="3.88 A"/>
    <property type="chains" value="9=1-129"/>
</dbReference>
<dbReference type="PDBsum" id="7TM3"/>
<dbReference type="PDBsum" id="7TUT"/>
<dbReference type="EMDB" id="EMD-26133"/>
<dbReference type="SMR" id="A0A8I3S9V6"/>
<dbReference type="FunCoup" id="A0A8I3S9V6">
    <property type="interactions" value="23"/>
</dbReference>
<dbReference type="Ensembl" id="ENSCAFT00000079481.2">
    <property type="protein sequence ID" value="ENSCAFP00000060909.2"/>
    <property type="gene ID" value="ENSCAFG00000029848.3"/>
</dbReference>
<dbReference type="Ensembl" id="ENSCAFT00030045927.1">
    <property type="protein sequence ID" value="ENSCAFP00030040121.1"/>
    <property type="gene ID" value="ENSCAFG00030024901.1"/>
</dbReference>
<dbReference type="Ensembl" id="ENSCAFT00040022151.1">
    <property type="protein sequence ID" value="ENSCAFP00040019217.1"/>
    <property type="gene ID" value="ENSCAFG00040011993.1"/>
</dbReference>
<dbReference type="Ensembl" id="ENSCAFT00805035919">
    <property type="protein sequence ID" value="ENSCAFP00805028208"/>
    <property type="gene ID" value="ENSCAFG00805019827"/>
</dbReference>
<dbReference type="Ensembl" id="ENSCAFT00845045974.1">
    <property type="protein sequence ID" value="ENSCAFP00845036093.1"/>
    <property type="gene ID" value="ENSCAFG00845026024.1"/>
</dbReference>
<dbReference type="GeneID" id="485858"/>
<dbReference type="CTD" id="55969"/>
<dbReference type="VGNC" id="VGNC:97216">
    <property type="gene designation" value="RAB5IF"/>
</dbReference>
<dbReference type="GeneTree" id="ENSGT00390000004786"/>
<dbReference type="OMA" id="ANSEWPD"/>
<dbReference type="OrthoDB" id="286395at2759"/>
<dbReference type="Proteomes" id="UP000002254">
    <property type="component" value="Chromosome 24"/>
</dbReference>
<dbReference type="Proteomes" id="UP000694429">
    <property type="component" value="Chromosome 24"/>
</dbReference>
<dbReference type="Proteomes" id="UP000694542">
    <property type="component" value="Chromosome 24"/>
</dbReference>
<dbReference type="Proteomes" id="UP000805418">
    <property type="component" value="Chromosome 24"/>
</dbReference>
<dbReference type="GO" id="GO:0005789">
    <property type="term" value="C:endoplasmic reticulum membrane"/>
    <property type="evidence" value="ECO:0000314"/>
    <property type="project" value="UniProtKB"/>
</dbReference>
<dbReference type="GO" id="GO:0005743">
    <property type="term" value="C:mitochondrial inner membrane"/>
    <property type="evidence" value="ECO:0007669"/>
    <property type="project" value="UniProtKB-SubCell"/>
</dbReference>
<dbReference type="GO" id="GO:0160064">
    <property type="term" value="C:multi-pass translocon complex"/>
    <property type="evidence" value="ECO:0000314"/>
    <property type="project" value="UniProtKB"/>
</dbReference>
<dbReference type="GO" id="GO:0097250">
    <property type="term" value="P:mitochondrial respirasome assembly"/>
    <property type="evidence" value="ECO:0007669"/>
    <property type="project" value="InterPro"/>
</dbReference>
<dbReference type="GO" id="GO:0160063">
    <property type="term" value="P:multi-pass transmembrane protein insertion into ER membrane"/>
    <property type="evidence" value="ECO:0000314"/>
    <property type="project" value="UniProtKB"/>
</dbReference>
<dbReference type="InterPro" id="IPR029008">
    <property type="entry name" value="EMC6-like"/>
</dbReference>
<dbReference type="InterPro" id="IPR010742">
    <property type="entry name" value="RCAF1"/>
</dbReference>
<dbReference type="PANTHER" id="PTHR12906:SF0">
    <property type="entry name" value="GEL COMPLEX SUBUNIT OPTI"/>
    <property type="match status" value="1"/>
</dbReference>
<dbReference type="PANTHER" id="PTHR12906">
    <property type="entry name" value="PROTEIN C20ORF24 RAB5-INTERACTING PROTEIN"/>
    <property type="match status" value="1"/>
</dbReference>
<dbReference type="Pfam" id="PF07019">
    <property type="entry name" value="EMC6"/>
    <property type="match status" value="1"/>
</dbReference>
<proteinExistence type="evidence at protein level"/>
<protein>
    <recommendedName>
        <fullName evidence="5">GEL complex subunit OPTI</fullName>
    </recommendedName>
    <alternativeName>
        <fullName evidence="4">Obligate partner of TMCO1 insertase</fullName>
    </alternativeName>
    <alternativeName>
        <fullName evidence="5">Rab5-interacting protein</fullName>
        <shortName evidence="5">RIP5</shortName>
    </alternativeName>
    <alternativeName>
        <fullName evidence="5">Respirasome Complex Assembly Factor 1</fullName>
        <shortName evidence="5">RCAF1</shortName>
    </alternativeName>
</protein>
<name>RCAF1_CANLF</name>
<feature type="chain" id="PRO_0000457556" description="GEL complex subunit OPTI">
    <location>
        <begin position="1"/>
        <end position="129"/>
    </location>
</feature>
<feature type="topological domain" description="Cytoplasmic" evidence="3 6 7">
    <location>
        <begin position="1"/>
        <end position="44"/>
    </location>
</feature>
<feature type="transmembrane region" description="Helical" evidence="3 6 7">
    <location>
        <begin position="45"/>
        <end position="65"/>
    </location>
</feature>
<feature type="topological domain" description="Lumenal" evidence="3 6 7">
    <location>
        <position position="66"/>
    </location>
</feature>
<feature type="transmembrane region" description="Helical" evidence="3 6 7">
    <location>
        <begin position="67"/>
        <end position="84"/>
    </location>
</feature>
<feature type="topological domain" description="Cytoplasmic" evidence="3 6 7">
    <location>
        <begin position="85"/>
        <end position="103"/>
    </location>
</feature>
<feature type="transmembrane region" description="Helical" evidence="3 6 7">
    <location>
        <begin position="104"/>
        <end position="127"/>
    </location>
</feature>
<feature type="topological domain" description="Lumenal" evidence="3 6 7">
    <location>
        <begin position="128"/>
        <end position="129"/>
    </location>
</feature>
<accession>A0A8I3S9V6</accession>
<sequence>MSGGRRKEEPPQPQLANGALKVSVWSKVLRSDAAWEDKDEFLDVIYWFRQIIAVVLGVIWGVLPLRGFLGIAGFCVINAGVLYLYFSNYLQIDEEEYGGTWELTKEGFMTSFALFMVIWIIFYTAIHYD</sequence>
<comment type="function">
    <text evidence="1 3">Component of the multi-pass translocon (MPT) complex that mediates insertion of multi-pass membrane proteins into the lipid bilayer of membranes (PubMed:36261528). The MPT complex takes over after the SEC61 complex: following membrane insertion of the first few transmembrane segments of proteins by the SEC61 complex, the MPT complex occludes the lateral gate of the SEC61 complex to promote insertion of subsequent transmembrane regions (PubMed:36261528). Within the MPT complex, the GEL subcomplex may mediate insertion of transmembrane regions into the membrane (PubMed:36261528). In addition to its role in multi-pass membrane insertion, RAB5IF/OPTI also acts as an assembly factor for mitochondrial respiratory complexes (By similarity).</text>
</comment>
<comment type="subunit">
    <text evidence="1 3">Component of the GET- and EMC-like (GEL) complex, composed of RAB5IF/OPTI and TMCO1 (PubMed:36261528). The GEL complex is part of the multi-pass translocon (MPT) complex, composed of three subcomplexes, the GEL complex (composed of RAB5IF/OPTI and TMCO1), the BOS complex (composed of NCLN/Nicalin, NOMO1 and TMEM147) and the PAT complex (composed of WDR83OS/Asterix and CCDC47) (PubMed:36261528). The MPT complex associates with the SEC61 complex (PubMed:36261528). Interacts with NDUFS3, NDUFA4, NDUFV1, NDUFA9 and NDUFS8 of the mitochondrial membrane respiratory chain NADH dehydrogenase (Complex I) (By similarity). Interacts with UQCRC2 of the ubiquinol-cytochrome c reductase complex (Complex III) (By similarity). Interacts with COX5A and COX7C of the cytochrome c oxidase complex (Complex IV) (By similarity).</text>
</comment>
<comment type="subcellular location">
    <subcellularLocation>
        <location evidence="3">Endoplasmic reticulum membrane</location>
        <topology evidence="3">Multi-pass membrane protein</topology>
    </subcellularLocation>
    <subcellularLocation>
        <location evidence="1">Mitochondrion inner membrane</location>
        <topology evidence="2">Multi-pass membrane protein</topology>
    </subcellularLocation>
</comment>
<comment type="similarity">
    <text evidence="5">Belongs to the EMC6 family.</text>
</comment>
<gene>
    <name type="primary">RAB5IF</name>
    <name evidence="4" type="synonym">OPTI</name>
</gene>
<keyword id="KW-0002">3D-structure</keyword>
<keyword id="KW-0256">Endoplasmic reticulum</keyword>
<keyword id="KW-0472">Membrane</keyword>
<keyword id="KW-0496">Mitochondrion</keyword>
<keyword id="KW-0999">Mitochondrion inner membrane</keyword>
<keyword id="KW-1185">Reference proteome</keyword>
<keyword id="KW-0812">Transmembrane</keyword>
<keyword id="KW-1133">Transmembrane helix</keyword>
<evidence type="ECO:0000250" key="1">
    <source>
        <dbReference type="UniProtKB" id="Q9BUV8"/>
    </source>
</evidence>
<evidence type="ECO:0000255" key="2"/>
<evidence type="ECO:0000269" key="3">
    <source>
    </source>
</evidence>
<evidence type="ECO:0000303" key="4">
    <source>
    </source>
</evidence>
<evidence type="ECO:0000305" key="5"/>
<evidence type="ECO:0007744" key="6">
    <source>
        <dbReference type="PDB" id="7TM3"/>
    </source>
</evidence>
<evidence type="ECO:0007744" key="7">
    <source>
        <dbReference type="PDB" id="7TUT"/>
    </source>
</evidence>
<reference key="1">
    <citation type="journal article" date="2005" name="Nature">
        <title>Genome sequence, comparative analysis and haplotype structure of the domestic dog.</title>
        <authorList>
            <person name="Lindblad-Toh K."/>
            <person name="Wade C.M."/>
            <person name="Mikkelsen T.S."/>
            <person name="Karlsson E.K."/>
            <person name="Jaffe D.B."/>
            <person name="Kamal M."/>
            <person name="Clamp M."/>
            <person name="Chang J.L."/>
            <person name="Kulbokas E.J. III"/>
            <person name="Zody M.C."/>
            <person name="Mauceli E."/>
            <person name="Xie X."/>
            <person name="Breen M."/>
            <person name="Wayne R.K."/>
            <person name="Ostrander E.A."/>
            <person name="Ponting C.P."/>
            <person name="Galibert F."/>
            <person name="Smith D.R."/>
            <person name="deJong P.J."/>
            <person name="Kirkness E.F."/>
            <person name="Alvarez P."/>
            <person name="Biagi T."/>
            <person name="Brockman W."/>
            <person name="Butler J."/>
            <person name="Chin C.-W."/>
            <person name="Cook A."/>
            <person name="Cuff J."/>
            <person name="Daly M.J."/>
            <person name="DeCaprio D."/>
            <person name="Gnerre S."/>
            <person name="Grabherr M."/>
            <person name="Kellis M."/>
            <person name="Kleber M."/>
            <person name="Bardeleben C."/>
            <person name="Goodstadt L."/>
            <person name="Heger A."/>
            <person name="Hitte C."/>
            <person name="Kim L."/>
            <person name="Koepfli K.-P."/>
            <person name="Parker H.G."/>
            <person name="Pollinger J.P."/>
            <person name="Searle S.M.J."/>
            <person name="Sutter N.B."/>
            <person name="Thomas R."/>
            <person name="Webber C."/>
            <person name="Baldwin J."/>
            <person name="Abebe A."/>
            <person name="Abouelleil A."/>
            <person name="Aftuck L."/>
            <person name="Ait-Zahra M."/>
            <person name="Aldredge T."/>
            <person name="Allen N."/>
            <person name="An P."/>
            <person name="Anderson S."/>
            <person name="Antoine C."/>
            <person name="Arachchi H."/>
            <person name="Aslam A."/>
            <person name="Ayotte L."/>
            <person name="Bachantsang P."/>
            <person name="Barry A."/>
            <person name="Bayul T."/>
            <person name="Benamara M."/>
            <person name="Berlin A."/>
            <person name="Bessette D."/>
            <person name="Blitshteyn B."/>
            <person name="Bloom T."/>
            <person name="Blye J."/>
            <person name="Boguslavskiy L."/>
            <person name="Bonnet C."/>
            <person name="Boukhgalter B."/>
            <person name="Brown A."/>
            <person name="Cahill P."/>
            <person name="Calixte N."/>
            <person name="Camarata J."/>
            <person name="Cheshatsang Y."/>
            <person name="Chu J."/>
            <person name="Citroen M."/>
            <person name="Collymore A."/>
            <person name="Cooke P."/>
            <person name="Dawoe T."/>
            <person name="Daza R."/>
            <person name="Decktor K."/>
            <person name="DeGray S."/>
            <person name="Dhargay N."/>
            <person name="Dooley K."/>
            <person name="Dooley K."/>
            <person name="Dorje P."/>
            <person name="Dorjee K."/>
            <person name="Dorris L."/>
            <person name="Duffey N."/>
            <person name="Dupes A."/>
            <person name="Egbiremolen O."/>
            <person name="Elong R."/>
            <person name="Falk J."/>
            <person name="Farina A."/>
            <person name="Faro S."/>
            <person name="Ferguson D."/>
            <person name="Ferreira P."/>
            <person name="Fisher S."/>
            <person name="FitzGerald M."/>
            <person name="Foley K."/>
            <person name="Foley C."/>
            <person name="Franke A."/>
            <person name="Friedrich D."/>
            <person name="Gage D."/>
            <person name="Garber M."/>
            <person name="Gearin G."/>
            <person name="Giannoukos G."/>
            <person name="Goode T."/>
            <person name="Goyette A."/>
            <person name="Graham J."/>
            <person name="Grandbois E."/>
            <person name="Gyaltsen K."/>
            <person name="Hafez N."/>
            <person name="Hagopian D."/>
            <person name="Hagos B."/>
            <person name="Hall J."/>
            <person name="Healy C."/>
            <person name="Hegarty R."/>
            <person name="Honan T."/>
            <person name="Horn A."/>
            <person name="Houde N."/>
            <person name="Hughes L."/>
            <person name="Hunnicutt L."/>
            <person name="Husby M."/>
            <person name="Jester B."/>
            <person name="Jones C."/>
            <person name="Kamat A."/>
            <person name="Kanga B."/>
            <person name="Kells C."/>
            <person name="Khazanovich D."/>
            <person name="Kieu A.C."/>
            <person name="Kisner P."/>
            <person name="Kumar M."/>
            <person name="Lance K."/>
            <person name="Landers T."/>
            <person name="Lara M."/>
            <person name="Lee W."/>
            <person name="Leger J.-P."/>
            <person name="Lennon N."/>
            <person name="Leuper L."/>
            <person name="LeVine S."/>
            <person name="Liu J."/>
            <person name="Liu X."/>
            <person name="Lokyitsang Y."/>
            <person name="Lokyitsang T."/>
            <person name="Lui A."/>
            <person name="Macdonald J."/>
            <person name="Major J."/>
            <person name="Marabella R."/>
            <person name="Maru K."/>
            <person name="Matthews C."/>
            <person name="McDonough S."/>
            <person name="Mehta T."/>
            <person name="Meldrim J."/>
            <person name="Melnikov A."/>
            <person name="Meneus L."/>
            <person name="Mihalev A."/>
            <person name="Mihova T."/>
            <person name="Miller K."/>
            <person name="Mittelman R."/>
            <person name="Mlenga V."/>
            <person name="Mulrain L."/>
            <person name="Munson G."/>
            <person name="Navidi A."/>
            <person name="Naylor J."/>
            <person name="Nguyen T."/>
            <person name="Nguyen N."/>
            <person name="Nguyen C."/>
            <person name="Nguyen T."/>
            <person name="Nicol R."/>
            <person name="Norbu N."/>
            <person name="Norbu C."/>
            <person name="Novod N."/>
            <person name="Nyima T."/>
            <person name="Olandt P."/>
            <person name="O'Neill B."/>
            <person name="O'Neill K."/>
            <person name="Osman S."/>
            <person name="Oyono L."/>
            <person name="Patti C."/>
            <person name="Perrin D."/>
            <person name="Phunkhang P."/>
            <person name="Pierre F."/>
            <person name="Priest M."/>
            <person name="Rachupka A."/>
            <person name="Raghuraman S."/>
            <person name="Rameau R."/>
            <person name="Ray V."/>
            <person name="Raymond C."/>
            <person name="Rege F."/>
            <person name="Rise C."/>
            <person name="Rogers J."/>
            <person name="Rogov P."/>
            <person name="Sahalie J."/>
            <person name="Settipalli S."/>
            <person name="Sharpe T."/>
            <person name="Shea T."/>
            <person name="Sheehan M."/>
            <person name="Sherpa N."/>
            <person name="Shi J."/>
            <person name="Shih D."/>
            <person name="Sloan J."/>
            <person name="Smith C."/>
            <person name="Sparrow T."/>
            <person name="Stalker J."/>
            <person name="Stange-Thomann N."/>
            <person name="Stavropoulos S."/>
            <person name="Stone C."/>
            <person name="Stone S."/>
            <person name="Sykes S."/>
            <person name="Tchuinga P."/>
            <person name="Tenzing P."/>
            <person name="Tesfaye S."/>
            <person name="Thoulutsang D."/>
            <person name="Thoulutsang Y."/>
            <person name="Topham K."/>
            <person name="Topping I."/>
            <person name="Tsamla T."/>
            <person name="Vassiliev H."/>
            <person name="Venkataraman V."/>
            <person name="Vo A."/>
            <person name="Wangchuk T."/>
            <person name="Wangdi T."/>
            <person name="Weiand M."/>
            <person name="Wilkinson J."/>
            <person name="Wilson A."/>
            <person name="Yadav S."/>
            <person name="Yang S."/>
            <person name="Yang X."/>
            <person name="Young G."/>
            <person name="Yu Q."/>
            <person name="Zainoun J."/>
            <person name="Zembek L."/>
            <person name="Zimmer A."/>
            <person name="Lander E.S."/>
        </authorList>
    </citation>
    <scope>NUCLEOTIDE SEQUENCE [LARGE SCALE GENOMIC DNA]</scope>
    <source>
        <strain>Boxer</strain>
    </source>
</reference>
<reference evidence="6 7" key="2">
    <citation type="journal article" date="2022" name="Nature">
        <title>Mechanism of an intramembrane chaperone for multipass membrane proteins.</title>
        <authorList>
            <person name="Smalinskaite L."/>
            <person name="Kim M.K."/>
            <person name="Lewis A.J.O."/>
            <person name="Keenan R.J."/>
            <person name="Hegde R.S."/>
        </authorList>
    </citation>
    <scope>STRUCTURE BY ELECTRON MICROSCOPY (3.88 ANGSTROMS) IN COMPLEX WITH THE MULTI-PASS TRANSLOCON COMPLEX</scope>
    <scope>FUNCTION</scope>
    <scope>IDENTIFICATION IN THE MULTI-PASS TRANSLOCON COMPLEX</scope>
    <scope>SUBCELLULAR LOCATION</scope>
</reference>